<sequence>MDGREAMAFPGSHSQFYLQRGVFTNLTPSQVASGLHAPPPPPGMRPMSNPNIHHPQASNPGPPFSMAEHRHSDFGHSIHMGMASPAAVQPTLQLPPPPSEQPMVKKKRGRPRKYVPDGQVSLGLSPMPCVSKKSKDSSSMSDPNAPKRARGRPPGTGRKQRLANLGEWMNTSAGLAFAPHVISVGSGEDIVSKVLSFSQKRPRALCIMSGTGTVSSVTLREPASTTPSLTFEGRFEILSLGGSYLVNEEGGSKSRTGGLSVSLSGPEGHVIGGGIGMLIAASLVQVVACSFVYGASAKSNNNNNKTIKQEIKPKQEPTNSEMETTPGSAPEAAASTGQHTPQNFPAQGMSGWPVSGSGSGRSLDSSRNPLTDIDLTRG</sequence>
<dbReference type="EMBL" id="AC008047">
    <property type="protein sequence ID" value="AAF19697.1"/>
    <property type="status" value="ALT_SEQ"/>
    <property type="molecule type" value="Genomic_DNA"/>
</dbReference>
<dbReference type="EMBL" id="CP002684">
    <property type="protein sequence ID" value="AEE34103.1"/>
    <property type="molecule type" value="Genomic_DNA"/>
</dbReference>
<dbReference type="EMBL" id="AK118329">
    <property type="protein sequence ID" value="BAC42943.1"/>
    <property type="molecule type" value="mRNA"/>
</dbReference>
<dbReference type="EMBL" id="BT005545">
    <property type="protein sequence ID" value="AAO63965.1"/>
    <property type="molecule type" value="mRNA"/>
</dbReference>
<dbReference type="EMBL" id="BR000341">
    <property type="protein sequence ID" value="FAA00276.1"/>
    <property type="molecule type" value="mRNA"/>
</dbReference>
<dbReference type="RefSeq" id="NP_176536.2">
    <property type="nucleotide sequence ID" value="NM_105026.4"/>
</dbReference>
<dbReference type="SMR" id="Q8GXB3"/>
<dbReference type="FunCoup" id="Q8GXB3">
    <property type="interactions" value="820"/>
</dbReference>
<dbReference type="IntAct" id="Q8GXB3">
    <property type="interactions" value="2"/>
</dbReference>
<dbReference type="STRING" id="3702.Q8GXB3"/>
<dbReference type="GlyGen" id="Q8GXB3">
    <property type="glycosylation" value="1 site"/>
</dbReference>
<dbReference type="iPTMnet" id="Q8GXB3"/>
<dbReference type="PaxDb" id="3702-AT1G63470.1"/>
<dbReference type="ProteomicsDB" id="244884"/>
<dbReference type="EnsemblPlants" id="AT1G63470.1">
    <property type="protein sequence ID" value="AT1G63470.1"/>
    <property type="gene ID" value="AT1G63470"/>
</dbReference>
<dbReference type="GeneID" id="842653"/>
<dbReference type="Gramene" id="AT1G63470.1">
    <property type="protein sequence ID" value="AT1G63470.1"/>
    <property type="gene ID" value="AT1G63470"/>
</dbReference>
<dbReference type="KEGG" id="ath:AT1G63470"/>
<dbReference type="Araport" id="AT1G63470"/>
<dbReference type="TAIR" id="AT1G63470">
    <property type="gene designation" value="AHL5"/>
</dbReference>
<dbReference type="eggNOG" id="ENOG502QUPI">
    <property type="taxonomic scope" value="Eukaryota"/>
</dbReference>
<dbReference type="HOGENOM" id="CLU_039808_0_2_1"/>
<dbReference type="InParanoid" id="Q8GXB3"/>
<dbReference type="OMA" id="MSFPSHY"/>
<dbReference type="PhylomeDB" id="Q8GXB3"/>
<dbReference type="PRO" id="PR:Q8GXB3"/>
<dbReference type="Proteomes" id="UP000006548">
    <property type="component" value="Chromosome 1"/>
</dbReference>
<dbReference type="ExpressionAtlas" id="Q8GXB3">
    <property type="expression patterns" value="baseline and differential"/>
</dbReference>
<dbReference type="GO" id="GO:0005634">
    <property type="term" value="C:nucleus"/>
    <property type="evidence" value="ECO:0007669"/>
    <property type="project" value="UniProtKB-SubCell"/>
</dbReference>
<dbReference type="GO" id="GO:0003680">
    <property type="term" value="F:minor groove of adenine-thymine-rich DNA binding"/>
    <property type="evidence" value="ECO:0007669"/>
    <property type="project" value="InterPro"/>
</dbReference>
<dbReference type="CDD" id="cd11378">
    <property type="entry name" value="DUF296"/>
    <property type="match status" value="1"/>
</dbReference>
<dbReference type="Gene3D" id="3.30.1330.80">
    <property type="entry name" value="Hypothetical protein, similar to alpha- acetolactate decarboxylase, domain 2"/>
    <property type="match status" value="1"/>
</dbReference>
<dbReference type="InterPro" id="IPR039605">
    <property type="entry name" value="AHL"/>
</dbReference>
<dbReference type="InterPro" id="IPR017956">
    <property type="entry name" value="AT_hook_DNA-bd_motif"/>
</dbReference>
<dbReference type="InterPro" id="IPR005175">
    <property type="entry name" value="PPC_dom"/>
</dbReference>
<dbReference type="PANTHER" id="PTHR31500:SF64">
    <property type="entry name" value="AT-HOOK MOTIF NUCLEAR-LOCALIZED PROTEIN 12-RELATED"/>
    <property type="match status" value="1"/>
</dbReference>
<dbReference type="PANTHER" id="PTHR31500">
    <property type="entry name" value="AT-HOOK MOTIF NUCLEAR-LOCALIZED PROTEIN 9"/>
    <property type="match status" value="1"/>
</dbReference>
<dbReference type="Pfam" id="PF03479">
    <property type="entry name" value="PCC"/>
    <property type="match status" value="1"/>
</dbReference>
<dbReference type="SMART" id="SM00384">
    <property type="entry name" value="AT_hook"/>
    <property type="match status" value="2"/>
</dbReference>
<dbReference type="SUPFAM" id="SSF117856">
    <property type="entry name" value="AF0104/ALDC/Ptd012-like"/>
    <property type="match status" value="1"/>
</dbReference>
<dbReference type="PROSITE" id="PS51742">
    <property type="entry name" value="PPC"/>
    <property type="match status" value="1"/>
</dbReference>
<comment type="function">
    <text evidence="1">Transcription factor that specifically binds AT-rich DNA sequences related to the nuclear matrix attachment regions (MARs).</text>
</comment>
<comment type="subunit">
    <text evidence="5">Interacts with AHL29.</text>
</comment>
<comment type="subcellular location">
    <subcellularLocation>
        <location evidence="1">Nucleus</location>
    </subcellularLocation>
</comment>
<comment type="domain">
    <text evidence="5">The PPC domain mediates interactions between AHL proteins.</text>
</comment>
<comment type="sequence caution" evidence="7">
    <conflict type="erroneous gene model prediction">
        <sequence resource="EMBL-CDS" id="AAF19697"/>
    </conflict>
    <text>The predicted gene has been split into 2 genes: At1g63470 and At1g63480.</text>
</comment>
<organism>
    <name type="scientific">Arabidopsis thaliana</name>
    <name type="common">Mouse-ear cress</name>
    <dbReference type="NCBI Taxonomy" id="3702"/>
    <lineage>
        <taxon>Eukaryota</taxon>
        <taxon>Viridiplantae</taxon>
        <taxon>Streptophyta</taxon>
        <taxon>Embryophyta</taxon>
        <taxon>Tracheophyta</taxon>
        <taxon>Spermatophyta</taxon>
        <taxon>Magnoliopsida</taxon>
        <taxon>eudicotyledons</taxon>
        <taxon>Gunneridae</taxon>
        <taxon>Pentapetalae</taxon>
        <taxon>rosids</taxon>
        <taxon>malvids</taxon>
        <taxon>Brassicales</taxon>
        <taxon>Brassicaceae</taxon>
        <taxon>Camelineae</taxon>
        <taxon>Arabidopsis</taxon>
    </lineage>
</organism>
<proteinExistence type="evidence at protein level"/>
<accession>Q8GXB3</accession>
<accession>Q9SH33</accession>
<feature type="chain" id="PRO_0000432023" description="AT-hook motif nuclear-localized protein 5">
    <location>
        <begin position="1"/>
        <end position="378"/>
    </location>
</feature>
<feature type="domain" description="PPC" evidence="3">
    <location>
        <begin position="171"/>
        <end position="314"/>
    </location>
</feature>
<feature type="DNA-binding region" description="A.T hook 1" evidence="2">
    <location>
        <begin position="105"/>
        <end position="117"/>
    </location>
</feature>
<feature type="DNA-binding region" description="A.T hook 2" evidence="2">
    <location>
        <begin position="147"/>
        <end position="159"/>
    </location>
</feature>
<feature type="region of interest" description="Disordered" evidence="4">
    <location>
        <begin position="30"/>
        <end position="70"/>
    </location>
</feature>
<feature type="region of interest" description="Disordered" evidence="4">
    <location>
        <begin position="88"/>
        <end position="160"/>
    </location>
</feature>
<feature type="region of interest" description="Disordered" evidence="4">
    <location>
        <begin position="302"/>
        <end position="378"/>
    </location>
</feature>
<feature type="short sequence motif" description="Bipartite nuclear localization signal" evidence="7">
    <location>
        <begin position="105"/>
        <end position="113"/>
    </location>
</feature>
<feature type="compositionally biased region" description="Basic residues" evidence="4">
    <location>
        <begin position="104"/>
        <end position="113"/>
    </location>
</feature>
<feature type="compositionally biased region" description="Polar residues" evidence="4">
    <location>
        <begin position="316"/>
        <end position="327"/>
    </location>
</feature>
<feature type="compositionally biased region" description="Polar residues" evidence="4">
    <location>
        <begin position="335"/>
        <end position="345"/>
    </location>
</feature>
<reference key="1">
    <citation type="journal article" date="2000" name="Nature">
        <title>Sequence and analysis of chromosome 1 of the plant Arabidopsis thaliana.</title>
        <authorList>
            <person name="Theologis A."/>
            <person name="Ecker J.R."/>
            <person name="Palm C.J."/>
            <person name="Federspiel N.A."/>
            <person name="Kaul S."/>
            <person name="White O."/>
            <person name="Alonso J."/>
            <person name="Altafi H."/>
            <person name="Araujo R."/>
            <person name="Bowman C.L."/>
            <person name="Brooks S.Y."/>
            <person name="Buehler E."/>
            <person name="Chan A."/>
            <person name="Chao Q."/>
            <person name="Chen H."/>
            <person name="Cheuk R.F."/>
            <person name="Chin C.W."/>
            <person name="Chung M.K."/>
            <person name="Conn L."/>
            <person name="Conway A.B."/>
            <person name="Conway A.R."/>
            <person name="Creasy T.H."/>
            <person name="Dewar K."/>
            <person name="Dunn P."/>
            <person name="Etgu P."/>
            <person name="Feldblyum T.V."/>
            <person name="Feng J.-D."/>
            <person name="Fong B."/>
            <person name="Fujii C.Y."/>
            <person name="Gill J.E."/>
            <person name="Goldsmith A.D."/>
            <person name="Haas B."/>
            <person name="Hansen N.F."/>
            <person name="Hughes B."/>
            <person name="Huizar L."/>
            <person name="Hunter J.L."/>
            <person name="Jenkins J."/>
            <person name="Johnson-Hopson C."/>
            <person name="Khan S."/>
            <person name="Khaykin E."/>
            <person name="Kim C.J."/>
            <person name="Koo H.L."/>
            <person name="Kremenetskaia I."/>
            <person name="Kurtz D.B."/>
            <person name="Kwan A."/>
            <person name="Lam B."/>
            <person name="Langin-Hooper S."/>
            <person name="Lee A."/>
            <person name="Lee J.M."/>
            <person name="Lenz C.A."/>
            <person name="Li J.H."/>
            <person name="Li Y.-P."/>
            <person name="Lin X."/>
            <person name="Liu S.X."/>
            <person name="Liu Z.A."/>
            <person name="Luros J.S."/>
            <person name="Maiti R."/>
            <person name="Marziali A."/>
            <person name="Militscher J."/>
            <person name="Miranda M."/>
            <person name="Nguyen M."/>
            <person name="Nierman W.C."/>
            <person name="Osborne B.I."/>
            <person name="Pai G."/>
            <person name="Peterson J."/>
            <person name="Pham P.K."/>
            <person name="Rizzo M."/>
            <person name="Rooney T."/>
            <person name="Rowley D."/>
            <person name="Sakano H."/>
            <person name="Salzberg S.L."/>
            <person name="Schwartz J.R."/>
            <person name="Shinn P."/>
            <person name="Southwick A.M."/>
            <person name="Sun H."/>
            <person name="Tallon L.J."/>
            <person name="Tambunga G."/>
            <person name="Toriumi M.J."/>
            <person name="Town C.D."/>
            <person name="Utterback T."/>
            <person name="Van Aken S."/>
            <person name="Vaysberg M."/>
            <person name="Vysotskaia V.S."/>
            <person name="Walker M."/>
            <person name="Wu D."/>
            <person name="Yu G."/>
            <person name="Fraser C.M."/>
            <person name="Venter J.C."/>
            <person name="Davis R.W."/>
        </authorList>
    </citation>
    <scope>NUCLEOTIDE SEQUENCE [LARGE SCALE GENOMIC DNA]</scope>
    <source>
        <strain>cv. Columbia</strain>
    </source>
</reference>
<reference key="2">
    <citation type="journal article" date="2017" name="Plant J.">
        <title>Araport11: a complete reannotation of the Arabidopsis thaliana reference genome.</title>
        <authorList>
            <person name="Cheng C.Y."/>
            <person name="Krishnakumar V."/>
            <person name="Chan A.P."/>
            <person name="Thibaud-Nissen F."/>
            <person name="Schobel S."/>
            <person name="Town C.D."/>
        </authorList>
    </citation>
    <scope>GENOME REANNOTATION</scope>
    <source>
        <strain>cv. Columbia</strain>
    </source>
</reference>
<reference key="3">
    <citation type="journal article" date="2002" name="Science">
        <title>Functional annotation of a full-length Arabidopsis cDNA collection.</title>
        <authorList>
            <person name="Seki M."/>
            <person name="Narusaka M."/>
            <person name="Kamiya A."/>
            <person name="Ishida J."/>
            <person name="Satou M."/>
            <person name="Sakurai T."/>
            <person name="Nakajima M."/>
            <person name="Enju A."/>
            <person name="Akiyama K."/>
            <person name="Oono Y."/>
            <person name="Muramatsu M."/>
            <person name="Hayashizaki Y."/>
            <person name="Kawai J."/>
            <person name="Carninci P."/>
            <person name="Itoh M."/>
            <person name="Ishii Y."/>
            <person name="Arakawa T."/>
            <person name="Shibata K."/>
            <person name="Shinagawa A."/>
            <person name="Shinozaki K."/>
        </authorList>
    </citation>
    <scope>NUCLEOTIDE SEQUENCE [LARGE SCALE MRNA]</scope>
    <source>
        <strain>cv. Columbia</strain>
    </source>
</reference>
<reference key="4">
    <citation type="journal article" date="2003" name="Science">
        <title>Empirical analysis of transcriptional activity in the Arabidopsis genome.</title>
        <authorList>
            <person name="Yamada K."/>
            <person name="Lim J."/>
            <person name="Dale J.M."/>
            <person name="Chen H."/>
            <person name="Shinn P."/>
            <person name="Palm C.J."/>
            <person name="Southwick A.M."/>
            <person name="Wu H.C."/>
            <person name="Kim C.J."/>
            <person name="Nguyen M."/>
            <person name="Pham P.K."/>
            <person name="Cheuk R.F."/>
            <person name="Karlin-Newmann G."/>
            <person name="Liu S.X."/>
            <person name="Lam B."/>
            <person name="Sakano H."/>
            <person name="Wu T."/>
            <person name="Yu G."/>
            <person name="Miranda M."/>
            <person name="Quach H.L."/>
            <person name="Tripp M."/>
            <person name="Chang C.H."/>
            <person name="Lee J.M."/>
            <person name="Toriumi M.J."/>
            <person name="Chan M.M."/>
            <person name="Tang C.C."/>
            <person name="Onodera C.S."/>
            <person name="Deng J.M."/>
            <person name="Akiyama K."/>
            <person name="Ansari Y."/>
            <person name="Arakawa T."/>
            <person name="Banh J."/>
            <person name="Banno F."/>
            <person name="Bowser L."/>
            <person name="Brooks S.Y."/>
            <person name="Carninci P."/>
            <person name="Chao Q."/>
            <person name="Choy N."/>
            <person name="Enju A."/>
            <person name="Goldsmith A.D."/>
            <person name="Gurjal M."/>
            <person name="Hansen N.F."/>
            <person name="Hayashizaki Y."/>
            <person name="Johnson-Hopson C."/>
            <person name="Hsuan V.W."/>
            <person name="Iida K."/>
            <person name="Karnes M."/>
            <person name="Khan S."/>
            <person name="Koesema E."/>
            <person name="Ishida J."/>
            <person name="Jiang P.X."/>
            <person name="Jones T."/>
            <person name="Kawai J."/>
            <person name="Kamiya A."/>
            <person name="Meyers C."/>
            <person name="Nakajima M."/>
            <person name="Narusaka M."/>
            <person name="Seki M."/>
            <person name="Sakurai T."/>
            <person name="Satou M."/>
            <person name="Tamse R."/>
            <person name="Vaysberg M."/>
            <person name="Wallender E.K."/>
            <person name="Wong C."/>
            <person name="Yamamura Y."/>
            <person name="Yuan S."/>
            <person name="Shinozaki K."/>
            <person name="Davis R.W."/>
            <person name="Theologis A."/>
            <person name="Ecker J.R."/>
        </authorList>
    </citation>
    <scope>NUCLEOTIDE SEQUENCE [LARGE SCALE MRNA]</scope>
    <source>
        <strain>cv. Columbia</strain>
    </source>
</reference>
<reference key="5">
    <citation type="journal article" date="2004" name="Plant Mol. Biol.">
        <title>Identification of a novel plant MAR DNA binding protein localized on chromosomal surfaces.</title>
        <authorList>
            <person name="Fujimoto S."/>
            <person name="Matsunaga S."/>
            <person name="Yonemura M."/>
            <person name="Uchiyama S."/>
            <person name="Azuma T."/>
            <person name="Fukui K."/>
        </authorList>
    </citation>
    <scope>IDENTIFICATION</scope>
    <scope>GENE FAMILY</scope>
    <scope>NOMENCLATURE</scope>
    <source>
        <strain>cv. Columbia</strain>
    </source>
</reference>
<reference key="6">
    <citation type="journal article" date="2013" name="Proc. Natl. Acad. Sci. U.S.A.">
        <title>Arabidopsis thaliana AHL family modulates hypocotyl growth redundantly by interacting with each other via the PPC/DUF296 domain.</title>
        <authorList>
            <person name="Zhao J."/>
            <person name="Favero D.S."/>
            <person name="Peng H."/>
            <person name="Neff M.M."/>
        </authorList>
    </citation>
    <scope>GENE FAMILY</scope>
    <scope>INTERACTION WITH AHL29</scope>
    <scope>DOMAIN PPC</scope>
</reference>
<keyword id="KW-0238">DNA-binding</keyword>
<keyword id="KW-0539">Nucleus</keyword>
<keyword id="KW-1185">Reference proteome</keyword>
<keyword id="KW-0677">Repeat</keyword>
<keyword id="KW-0804">Transcription</keyword>
<keyword id="KW-0805">Transcription regulation</keyword>
<evidence type="ECO:0000250" key="1">
    <source>
        <dbReference type="UniProtKB" id="Q8VYJ2"/>
    </source>
</evidence>
<evidence type="ECO:0000255" key="2"/>
<evidence type="ECO:0000255" key="3">
    <source>
        <dbReference type="PROSITE-ProRule" id="PRU01078"/>
    </source>
</evidence>
<evidence type="ECO:0000256" key="4">
    <source>
        <dbReference type="SAM" id="MobiDB-lite"/>
    </source>
</evidence>
<evidence type="ECO:0000269" key="5">
    <source>
    </source>
</evidence>
<evidence type="ECO:0000303" key="6">
    <source>
    </source>
</evidence>
<evidence type="ECO:0000305" key="7"/>
<evidence type="ECO:0000312" key="8">
    <source>
        <dbReference type="Araport" id="AT1G63470"/>
    </source>
</evidence>
<evidence type="ECO:0000312" key="9">
    <source>
        <dbReference type="EMBL" id="AAF19697.1"/>
    </source>
</evidence>
<evidence type="ECO:0000312" key="10">
    <source>
        <dbReference type="EMBL" id="FAA00276.1"/>
    </source>
</evidence>
<gene>
    <name evidence="6" type="primary">AHL5</name>
    <name evidence="8" type="ordered locus">At1g63470</name>
    <name evidence="9" type="ORF">F2K11.15</name>
</gene>
<protein>
    <recommendedName>
        <fullName evidence="10">AT-hook motif nuclear-localized protein 5</fullName>
    </recommendedName>
</protein>
<name>AHL5_ARATH</name>